<feature type="signal peptide" evidence="2">
    <location>
        <begin position="1"/>
        <end position="23"/>
    </location>
</feature>
<feature type="peptide" id="PRO_0000418783" description="Amphipathic peptide CT2">
    <location>
        <begin position="24"/>
        <end position="36"/>
    </location>
</feature>
<feature type="propeptide" id="PRO_0000418784" evidence="1">
    <location>
        <begin position="40"/>
        <end position="69"/>
    </location>
</feature>
<feature type="site" description="Important for activity" evidence="1">
    <location>
        <position position="29"/>
    </location>
</feature>
<feature type="modified residue" description="Phenylalanine amide" evidence="1">
    <location>
        <position position="36"/>
    </location>
</feature>
<comment type="function">
    <text evidence="3">Amphipathic peptide that shows antibacterial activities against both Gram-positive (MIC=10 uM, 20 uM and 20 uM against S.aureus, B.subtilis and S.agalactiae, respectively) and Gram-negative bacteria (MIC=20 uM, 10 uM, and 10 uM against E.coli, S.typhi, and P.aeruginosa, respectively). Is mildly hemolytic at its MIC range, but shows a strong cytotoxic activity at higher concentrations, reaching 84% lysis at 50 uM.</text>
</comment>
<comment type="subcellular location">
    <subcellularLocation>
        <location evidence="1">Secreted</location>
    </subcellularLocation>
    <subcellularLocation>
        <location evidence="1">Target cell membrane</location>
    </subcellularLocation>
    <text evidence="1">Forms a helical membrane channel in the prey.</text>
</comment>
<comment type="tissue specificity">
    <text>Expressed by the venom gland.</text>
</comment>
<comment type="similarity">
    <text evidence="7">Belongs to the non-disulfide-bridged peptide (NDBP) superfamily. Short antimicrobial peptide (group 4) family.</text>
</comment>
<sequence length="69" mass="7897">MKTQFVILIVAVVLLQLIANSEAFLSTLWNAAKSIFGKRGLRNLDNLDDDIFEPEMSEADLRYLQDLLR</sequence>
<name>NDB4E_VAEMS</name>
<organism>
    <name type="scientific">Vaejovis mexicanus smithi</name>
    <name type="common">Mexican scorpion</name>
    <name type="synonym">Vaejovis smithi</name>
    <dbReference type="NCBI Taxonomy" id="1562928"/>
    <lineage>
        <taxon>Eukaryota</taxon>
        <taxon>Metazoa</taxon>
        <taxon>Ecdysozoa</taxon>
        <taxon>Arthropoda</taxon>
        <taxon>Chelicerata</taxon>
        <taxon>Arachnida</taxon>
        <taxon>Scorpiones</taxon>
        <taxon>Iurida</taxon>
        <taxon>Chactoidea</taxon>
        <taxon>Vaejovidae</taxon>
        <taxon>Vaejovis</taxon>
    </lineage>
</organism>
<keyword id="KW-0027">Amidation</keyword>
<keyword id="KW-0044">Antibiotic</keyword>
<keyword id="KW-0929">Antimicrobial</keyword>
<keyword id="KW-0165">Cleavage on pair of basic residues</keyword>
<keyword id="KW-0204">Cytolysis</keyword>
<keyword id="KW-0354">Hemolysis</keyword>
<keyword id="KW-0472">Membrane</keyword>
<keyword id="KW-0964">Secreted</keyword>
<keyword id="KW-0732">Signal</keyword>
<keyword id="KW-1052">Target cell membrane</keyword>
<keyword id="KW-1053">Target membrane</keyword>
<accession>I0DEB4</accession>
<protein>
    <recommendedName>
        <fullName evidence="4">Amphipathic peptide CT2</fullName>
        <shortName evidence="4">VmCT2</shortName>
    </recommendedName>
    <alternativeName>
        <fullName evidence="6">Non-disulfide-bridged peptide 4.14</fullName>
        <shortName evidence="6">NDBP-4.14</shortName>
    </alternativeName>
    <alternativeName>
        <fullName evidence="5">Non-disulfide-bridged peptide 5.14</fullName>
        <shortName evidence="5">NDBP-5.14</shortName>
    </alternativeName>
</protein>
<evidence type="ECO:0000250" key="1"/>
<evidence type="ECO:0000255" key="2"/>
<evidence type="ECO:0000269" key="3">
    <source>
    </source>
</evidence>
<evidence type="ECO:0000303" key="4">
    <source>
    </source>
</evidence>
<evidence type="ECO:0000303" key="5">
    <source>
    </source>
</evidence>
<evidence type="ECO:0000303" key="6">
    <source>
    </source>
</evidence>
<evidence type="ECO:0000305" key="7"/>
<dbReference type="EMBL" id="JQ086326">
    <property type="protein sequence ID" value="AFH87945.1"/>
    <property type="molecule type" value="mRNA"/>
</dbReference>
<dbReference type="SMR" id="I0DEB4"/>
<dbReference type="GO" id="GO:0005576">
    <property type="term" value="C:extracellular region"/>
    <property type="evidence" value="ECO:0007669"/>
    <property type="project" value="UniProtKB-SubCell"/>
</dbReference>
<dbReference type="GO" id="GO:0016020">
    <property type="term" value="C:membrane"/>
    <property type="evidence" value="ECO:0007669"/>
    <property type="project" value="UniProtKB-KW"/>
</dbReference>
<dbReference type="GO" id="GO:0044218">
    <property type="term" value="C:other organism cell membrane"/>
    <property type="evidence" value="ECO:0007669"/>
    <property type="project" value="UniProtKB-KW"/>
</dbReference>
<dbReference type="GO" id="GO:0042742">
    <property type="term" value="P:defense response to bacterium"/>
    <property type="evidence" value="ECO:0007669"/>
    <property type="project" value="UniProtKB-KW"/>
</dbReference>
<dbReference type="GO" id="GO:0031640">
    <property type="term" value="P:killing of cells of another organism"/>
    <property type="evidence" value="ECO:0007669"/>
    <property type="project" value="UniProtKB-KW"/>
</dbReference>
<reference key="1">
    <citation type="journal article" date="2012" name="Peptides">
        <title>Gene cloning and functional characterization of four novel antimicrobial-like peptides from scorpions of the family Vaejovidae.</title>
        <authorList>
            <person name="Ramirez-Carreto S."/>
            <person name="Quintero-Hernandez V."/>
            <person name="Jimenez-Vargas J.M."/>
            <person name="Corzo G."/>
            <person name="Possani L.D."/>
            <person name="Becerril B."/>
            <person name="Ortiz E."/>
        </authorList>
    </citation>
    <scope>NUCLEOTIDE SEQUENCE [MRNA]</scope>
    <scope>SYNTHESIS OF 24-36</scope>
    <scope>FUNCTION</scope>
    <scope>CIRCULAR DICHROISM ANALYSIS</scope>
    <source>
        <tissue>Venom gland</tissue>
    </source>
</reference>
<reference key="2">
    <citation type="journal article" date="2013" name="Peptides">
        <title>Three new antimicrobial peptides from the scorpion Pandinus imperator.</title>
        <authorList>
            <person name="Zeng X.C."/>
            <person name="Zhou L."/>
            <person name="Shi W."/>
            <person name="Luo X."/>
            <person name="Zhang L."/>
            <person name="Nie Y."/>
            <person name="Wang J."/>
            <person name="Wu S."/>
            <person name="Cao B."/>
            <person name="Cao H."/>
        </authorList>
    </citation>
    <scope>NOMENCLATURE</scope>
</reference>
<reference key="3">
    <citation type="journal article" date="2014" name="Peptides">
        <title>Scorpion venom peptides with no disulfide bridges: a review.</title>
        <authorList>
            <person name="Almaaytah A."/>
            <person name="Albalas Q."/>
        </authorList>
    </citation>
    <scope>NOMENCLATURE</scope>
</reference>
<proteinExistence type="evidence at transcript level"/>